<protein>
    <recommendedName>
        <fullName evidence="2">Photosystem I iron-sulfur center</fullName>
        <ecNumber evidence="2">1.97.1.12</ecNumber>
    </recommendedName>
    <alternativeName>
        <fullName evidence="2">9 kDa polypeptide</fullName>
    </alternativeName>
    <alternativeName>
        <fullName evidence="2">PSI-C</fullName>
    </alternativeName>
    <alternativeName>
        <fullName evidence="2">Photosystem I subunit VII</fullName>
    </alternativeName>
    <alternativeName>
        <fullName evidence="2">PsaC</fullName>
    </alternativeName>
</protein>
<dbReference type="EC" id="1.97.1.12" evidence="2"/>
<dbReference type="EMBL" id="EF044213">
    <property type="protein sequence ID" value="ABJ89730.1"/>
    <property type="molecule type" value="Genomic_DNA"/>
</dbReference>
<dbReference type="RefSeq" id="YP_817533.1">
    <property type="nucleotide sequence ID" value="NC_008535.1"/>
</dbReference>
<dbReference type="SMR" id="A0A386"/>
<dbReference type="GeneID" id="4421852"/>
<dbReference type="OrthoDB" id="9at2759"/>
<dbReference type="Proteomes" id="UP000515148">
    <property type="component" value="Chloroplast Pltd"/>
</dbReference>
<dbReference type="GO" id="GO:0009535">
    <property type="term" value="C:chloroplast thylakoid membrane"/>
    <property type="evidence" value="ECO:0007669"/>
    <property type="project" value="UniProtKB-SubCell"/>
</dbReference>
<dbReference type="GO" id="GO:0009522">
    <property type="term" value="C:photosystem I"/>
    <property type="evidence" value="ECO:0007669"/>
    <property type="project" value="UniProtKB-KW"/>
</dbReference>
<dbReference type="GO" id="GO:0051539">
    <property type="term" value="F:4 iron, 4 sulfur cluster binding"/>
    <property type="evidence" value="ECO:0007669"/>
    <property type="project" value="UniProtKB-KW"/>
</dbReference>
<dbReference type="GO" id="GO:0009055">
    <property type="term" value="F:electron transfer activity"/>
    <property type="evidence" value="ECO:0007669"/>
    <property type="project" value="UniProtKB-UniRule"/>
</dbReference>
<dbReference type="GO" id="GO:0046872">
    <property type="term" value="F:metal ion binding"/>
    <property type="evidence" value="ECO:0007669"/>
    <property type="project" value="UniProtKB-KW"/>
</dbReference>
<dbReference type="GO" id="GO:0016491">
    <property type="term" value="F:oxidoreductase activity"/>
    <property type="evidence" value="ECO:0007669"/>
    <property type="project" value="UniProtKB-KW"/>
</dbReference>
<dbReference type="GO" id="GO:0009773">
    <property type="term" value="P:photosynthetic electron transport in photosystem I"/>
    <property type="evidence" value="ECO:0007669"/>
    <property type="project" value="InterPro"/>
</dbReference>
<dbReference type="FunFam" id="3.30.70.20:FF:000001">
    <property type="entry name" value="Photosystem I iron-sulfur center"/>
    <property type="match status" value="1"/>
</dbReference>
<dbReference type="Gene3D" id="3.30.70.20">
    <property type="match status" value="1"/>
</dbReference>
<dbReference type="HAMAP" id="MF_01303">
    <property type="entry name" value="PSI_PsaC"/>
    <property type="match status" value="1"/>
</dbReference>
<dbReference type="InterPro" id="IPR017896">
    <property type="entry name" value="4Fe4S_Fe-S-bd"/>
</dbReference>
<dbReference type="InterPro" id="IPR017900">
    <property type="entry name" value="4Fe4S_Fe_S_CS"/>
</dbReference>
<dbReference type="InterPro" id="IPR050157">
    <property type="entry name" value="PSI_iron-sulfur_center"/>
</dbReference>
<dbReference type="InterPro" id="IPR017491">
    <property type="entry name" value="PSI_PsaC"/>
</dbReference>
<dbReference type="NCBIfam" id="TIGR03048">
    <property type="entry name" value="PS_I_psaC"/>
    <property type="match status" value="1"/>
</dbReference>
<dbReference type="PANTHER" id="PTHR24960:SF79">
    <property type="entry name" value="PHOTOSYSTEM I IRON-SULFUR CENTER"/>
    <property type="match status" value="1"/>
</dbReference>
<dbReference type="PANTHER" id="PTHR24960">
    <property type="entry name" value="PHOTOSYSTEM I IRON-SULFUR CENTER-RELATED"/>
    <property type="match status" value="1"/>
</dbReference>
<dbReference type="Pfam" id="PF14697">
    <property type="entry name" value="Fer4_21"/>
    <property type="match status" value="1"/>
</dbReference>
<dbReference type="SUPFAM" id="SSF54862">
    <property type="entry name" value="4Fe-4S ferredoxins"/>
    <property type="match status" value="1"/>
</dbReference>
<dbReference type="PROSITE" id="PS00198">
    <property type="entry name" value="4FE4S_FER_1"/>
    <property type="match status" value="2"/>
</dbReference>
<dbReference type="PROSITE" id="PS51379">
    <property type="entry name" value="4FE4S_FER_2"/>
    <property type="match status" value="2"/>
</dbReference>
<organism>
    <name type="scientific">Coffea arabica</name>
    <name type="common">Arabian coffee</name>
    <dbReference type="NCBI Taxonomy" id="13443"/>
    <lineage>
        <taxon>Eukaryota</taxon>
        <taxon>Viridiplantae</taxon>
        <taxon>Streptophyta</taxon>
        <taxon>Embryophyta</taxon>
        <taxon>Tracheophyta</taxon>
        <taxon>Spermatophyta</taxon>
        <taxon>Magnoliopsida</taxon>
        <taxon>eudicotyledons</taxon>
        <taxon>Gunneridae</taxon>
        <taxon>Pentapetalae</taxon>
        <taxon>asterids</taxon>
        <taxon>lamiids</taxon>
        <taxon>Gentianales</taxon>
        <taxon>Rubiaceae</taxon>
        <taxon>Ixoroideae</taxon>
        <taxon>Gardenieae complex</taxon>
        <taxon>Bertiereae - Coffeeae clade</taxon>
        <taxon>Coffeeae</taxon>
        <taxon>Coffea</taxon>
    </lineage>
</organism>
<comment type="function">
    <text evidence="2">Apoprotein for the two 4Fe-4S centers FA and FB of photosystem I (PSI); essential for photochemical activity. FB is the terminal electron acceptor of PSI, donating electrons to ferredoxin. The C-terminus interacts with PsaA/B/D and helps assemble the protein into the PSI complex. Required for binding of PsaD and PsaE to PSI. PSI is a plastocyanin-ferredoxin oxidoreductase, converting photonic excitation into a charge separation, which transfers an electron from the donor P700 chlorophyll pair to the spectroscopically characterized acceptors A0, A1, FX, FA and FB in turn.</text>
</comment>
<comment type="catalytic activity">
    <reaction evidence="2">
        <text>reduced [plastocyanin] + hnu + oxidized [2Fe-2S]-[ferredoxin] = oxidized [plastocyanin] + reduced [2Fe-2S]-[ferredoxin]</text>
        <dbReference type="Rhea" id="RHEA:30407"/>
        <dbReference type="Rhea" id="RHEA-COMP:10000"/>
        <dbReference type="Rhea" id="RHEA-COMP:10001"/>
        <dbReference type="Rhea" id="RHEA-COMP:10039"/>
        <dbReference type="Rhea" id="RHEA-COMP:10040"/>
        <dbReference type="ChEBI" id="CHEBI:29036"/>
        <dbReference type="ChEBI" id="CHEBI:30212"/>
        <dbReference type="ChEBI" id="CHEBI:33737"/>
        <dbReference type="ChEBI" id="CHEBI:33738"/>
        <dbReference type="ChEBI" id="CHEBI:49552"/>
        <dbReference type="EC" id="1.97.1.12"/>
    </reaction>
</comment>
<comment type="cofactor">
    <cofactor evidence="2">
        <name>[4Fe-4S] cluster</name>
        <dbReference type="ChEBI" id="CHEBI:49883"/>
    </cofactor>
    <text evidence="2">Binds 2 [4Fe-4S] clusters. Cluster 2 is most probably the spectroscopically characterized electron acceptor FA and cluster 1 is most probably FB.</text>
</comment>
<comment type="subunit">
    <text evidence="2">The eukaryotic PSI reaction center is composed of at least 11 subunits.</text>
</comment>
<comment type="subcellular location">
    <subcellularLocation>
        <location evidence="2">Plastid</location>
        <location evidence="2">Chloroplast thylakoid membrane</location>
        <topology evidence="2">Peripheral membrane protein</topology>
        <orientation evidence="2">Stromal side</orientation>
    </subcellularLocation>
</comment>
<reference key="1">
    <citation type="journal article" date="2007" name="Plant Biotechnol. J.">
        <title>The complete nucleotide sequence of the coffee (Coffea arabica L.) chloroplast genome: organization and implications for biotechnology and phylogenetic relationships amongst angiosperms.</title>
        <authorList>
            <person name="Samson N."/>
            <person name="Bausher M.G."/>
            <person name="Lee S.-B."/>
            <person name="Jansen R.K."/>
            <person name="Daniell H."/>
        </authorList>
    </citation>
    <scope>NUCLEOTIDE SEQUENCE [LARGE SCALE GENOMIC DNA]</scope>
</reference>
<accession>A0A386</accession>
<feature type="initiator methionine" description="Removed" evidence="1">
    <location>
        <position position="1"/>
    </location>
</feature>
<feature type="chain" id="PRO_0000275977" description="Photosystem I iron-sulfur center">
    <location>
        <begin position="2"/>
        <end position="81"/>
    </location>
</feature>
<feature type="domain" description="4Fe-4S ferredoxin-type 1" evidence="2">
    <location>
        <begin position="2"/>
        <end position="31"/>
    </location>
</feature>
<feature type="domain" description="4Fe-4S ferredoxin-type 2" evidence="2">
    <location>
        <begin position="39"/>
        <end position="68"/>
    </location>
</feature>
<feature type="binding site" evidence="2">
    <location>
        <position position="11"/>
    </location>
    <ligand>
        <name>[4Fe-4S] cluster</name>
        <dbReference type="ChEBI" id="CHEBI:49883"/>
        <label>1</label>
    </ligand>
</feature>
<feature type="binding site" evidence="2">
    <location>
        <position position="14"/>
    </location>
    <ligand>
        <name>[4Fe-4S] cluster</name>
        <dbReference type="ChEBI" id="CHEBI:49883"/>
        <label>1</label>
    </ligand>
</feature>
<feature type="binding site" evidence="2">
    <location>
        <position position="17"/>
    </location>
    <ligand>
        <name>[4Fe-4S] cluster</name>
        <dbReference type="ChEBI" id="CHEBI:49883"/>
        <label>1</label>
    </ligand>
</feature>
<feature type="binding site" evidence="2">
    <location>
        <position position="21"/>
    </location>
    <ligand>
        <name>[4Fe-4S] cluster</name>
        <dbReference type="ChEBI" id="CHEBI:49883"/>
        <label>2</label>
    </ligand>
</feature>
<feature type="binding site" evidence="2">
    <location>
        <position position="48"/>
    </location>
    <ligand>
        <name>[4Fe-4S] cluster</name>
        <dbReference type="ChEBI" id="CHEBI:49883"/>
        <label>2</label>
    </ligand>
</feature>
<feature type="binding site" evidence="2">
    <location>
        <position position="51"/>
    </location>
    <ligand>
        <name>[4Fe-4S] cluster</name>
        <dbReference type="ChEBI" id="CHEBI:49883"/>
        <label>2</label>
    </ligand>
</feature>
<feature type="binding site" evidence="2">
    <location>
        <position position="54"/>
    </location>
    <ligand>
        <name>[4Fe-4S] cluster</name>
        <dbReference type="ChEBI" id="CHEBI:49883"/>
        <label>2</label>
    </ligand>
</feature>
<feature type="binding site" evidence="2">
    <location>
        <position position="58"/>
    </location>
    <ligand>
        <name>[4Fe-4S] cluster</name>
        <dbReference type="ChEBI" id="CHEBI:49883"/>
        <label>1</label>
    </ligand>
</feature>
<evidence type="ECO:0000250" key="1"/>
<evidence type="ECO:0000255" key="2">
    <source>
        <dbReference type="HAMAP-Rule" id="MF_01303"/>
    </source>
</evidence>
<name>PSAC_COFAR</name>
<geneLocation type="chloroplast"/>
<gene>
    <name evidence="2" type="primary">psaC</name>
</gene>
<proteinExistence type="inferred from homology"/>
<sequence>MSHSVKIYDTCIGCTQCVRACPTDVLEMIPWDGCKAKQIASAPRTEDCVGCKRCESACPTDFLSVRVYLWHETTRSMGLAY</sequence>
<keyword id="KW-0004">4Fe-4S</keyword>
<keyword id="KW-0150">Chloroplast</keyword>
<keyword id="KW-0249">Electron transport</keyword>
<keyword id="KW-0408">Iron</keyword>
<keyword id="KW-0411">Iron-sulfur</keyword>
<keyword id="KW-0472">Membrane</keyword>
<keyword id="KW-0479">Metal-binding</keyword>
<keyword id="KW-0560">Oxidoreductase</keyword>
<keyword id="KW-0602">Photosynthesis</keyword>
<keyword id="KW-0603">Photosystem I</keyword>
<keyword id="KW-0934">Plastid</keyword>
<keyword id="KW-1185">Reference proteome</keyword>
<keyword id="KW-0677">Repeat</keyword>
<keyword id="KW-0793">Thylakoid</keyword>
<keyword id="KW-0813">Transport</keyword>